<dbReference type="EMBL" id="CP000448">
    <property type="protein sequence ID" value="ABI68889.1"/>
    <property type="molecule type" value="Genomic_DNA"/>
</dbReference>
<dbReference type="RefSeq" id="WP_011640988.1">
    <property type="nucleotide sequence ID" value="NC_008346.1"/>
</dbReference>
<dbReference type="SMR" id="Q0AWL5"/>
<dbReference type="STRING" id="335541.Swol_1587"/>
<dbReference type="KEGG" id="swo:Swol_1587"/>
<dbReference type="eggNOG" id="COG0268">
    <property type="taxonomic scope" value="Bacteria"/>
</dbReference>
<dbReference type="HOGENOM" id="CLU_160655_1_0_9"/>
<dbReference type="OrthoDB" id="9808392at2"/>
<dbReference type="Proteomes" id="UP000001968">
    <property type="component" value="Chromosome"/>
</dbReference>
<dbReference type="GO" id="GO:0005829">
    <property type="term" value="C:cytosol"/>
    <property type="evidence" value="ECO:0007669"/>
    <property type="project" value="TreeGrafter"/>
</dbReference>
<dbReference type="GO" id="GO:0015935">
    <property type="term" value="C:small ribosomal subunit"/>
    <property type="evidence" value="ECO:0007669"/>
    <property type="project" value="TreeGrafter"/>
</dbReference>
<dbReference type="GO" id="GO:0070181">
    <property type="term" value="F:small ribosomal subunit rRNA binding"/>
    <property type="evidence" value="ECO:0007669"/>
    <property type="project" value="TreeGrafter"/>
</dbReference>
<dbReference type="GO" id="GO:0003735">
    <property type="term" value="F:structural constituent of ribosome"/>
    <property type="evidence" value="ECO:0007669"/>
    <property type="project" value="InterPro"/>
</dbReference>
<dbReference type="GO" id="GO:0006412">
    <property type="term" value="P:translation"/>
    <property type="evidence" value="ECO:0007669"/>
    <property type="project" value="UniProtKB-UniRule"/>
</dbReference>
<dbReference type="Gene3D" id="1.20.58.110">
    <property type="entry name" value="Ribosomal protein S20"/>
    <property type="match status" value="1"/>
</dbReference>
<dbReference type="HAMAP" id="MF_00500">
    <property type="entry name" value="Ribosomal_bS20"/>
    <property type="match status" value="1"/>
</dbReference>
<dbReference type="InterPro" id="IPR002583">
    <property type="entry name" value="Ribosomal_bS20"/>
</dbReference>
<dbReference type="InterPro" id="IPR036510">
    <property type="entry name" value="Ribosomal_bS20_sf"/>
</dbReference>
<dbReference type="NCBIfam" id="TIGR00029">
    <property type="entry name" value="S20"/>
    <property type="match status" value="1"/>
</dbReference>
<dbReference type="PANTHER" id="PTHR33398">
    <property type="entry name" value="30S RIBOSOMAL PROTEIN S20"/>
    <property type="match status" value="1"/>
</dbReference>
<dbReference type="PANTHER" id="PTHR33398:SF1">
    <property type="entry name" value="SMALL RIBOSOMAL SUBUNIT PROTEIN BS20C"/>
    <property type="match status" value="1"/>
</dbReference>
<dbReference type="Pfam" id="PF01649">
    <property type="entry name" value="Ribosomal_S20p"/>
    <property type="match status" value="1"/>
</dbReference>
<dbReference type="SUPFAM" id="SSF46992">
    <property type="entry name" value="Ribosomal protein S20"/>
    <property type="match status" value="1"/>
</dbReference>
<reference key="1">
    <citation type="journal article" date="2010" name="Environ. Microbiol.">
        <title>The genome of Syntrophomonas wolfei: new insights into syntrophic metabolism and biohydrogen production.</title>
        <authorList>
            <person name="Sieber J.R."/>
            <person name="Sims D.R."/>
            <person name="Han C."/>
            <person name="Kim E."/>
            <person name="Lykidis A."/>
            <person name="Lapidus A.L."/>
            <person name="McDonnald E."/>
            <person name="Rohlin L."/>
            <person name="Culley D.E."/>
            <person name="Gunsalus R."/>
            <person name="McInerney M.J."/>
        </authorList>
    </citation>
    <scope>NUCLEOTIDE SEQUENCE [LARGE SCALE GENOMIC DNA]</scope>
    <source>
        <strain>DSM 2245B / Goettingen</strain>
    </source>
</reference>
<comment type="function">
    <text evidence="1">Binds directly to 16S ribosomal RNA.</text>
</comment>
<comment type="similarity">
    <text evidence="1">Belongs to the bacterial ribosomal protein bS20 family.</text>
</comment>
<name>RS20_SYNWW</name>
<protein>
    <recommendedName>
        <fullName evidence="1">Small ribosomal subunit protein bS20</fullName>
    </recommendedName>
    <alternativeName>
        <fullName evidence="2">30S ribosomal protein S20</fullName>
    </alternativeName>
</protein>
<proteinExistence type="inferred from homology"/>
<sequence>MAKSKTPAKRARRAEANRLRNKAYKSKLKTAIKNYENAIIAEDLDTASNKLLQVTSLLDRSITKGILHKNNVARKKSALSKKLNSISQ</sequence>
<gene>
    <name evidence="1" type="primary">rpsT</name>
    <name type="ordered locus">Swol_1587</name>
</gene>
<keyword id="KW-1185">Reference proteome</keyword>
<keyword id="KW-0687">Ribonucleoprotein</keyword>
<keyword id="KW-0689">Ribosomal protein</keyword>
<keyword id="KW-0694">RNA-binding</keyword>
<keyword id="KW-0699">rRNA-binding</keyword>
<organism>
    <name type="scientific">Syntrophomonas wolfei subsp. wolfei (strain DSM 2245B / Goettingen)</name>
    <dbReference type="NCBI Taxonomy" id="335541"/>
    <lineage>
        <taxon>Bacteria</taxon>
        <taxon>Bacillati</taxon>
        <taxon>Bacillota</taxon>
        <taxon>Clostridia</taxon>
        <taxon>Eubacteriales</taxon>
        <taxon>Syntrophomonadaceae</taxon>
        <taxon>Syntrophomonas</taxon>
    </lineage>
</organism>
<feature type="chain" id="PRO_1000014670" description="Small ribosomal subunit protein bS20">
    <location>
        <begin position="1"/>
        <end position="88"/>
    </location>
</feature>
<evidence type="ECO:0000255" key="1">
    <source>
        <dbReference type="HAMAP-Rule" id="MF_00500"/>
    </source>
</evidence>
<evidence type="ECO:0000305" key="2"/>
<accession>Q0AWL5</accession>